<dbReference type="EMBL" id="CP000384">
    <property type="protein sequence ID" value="ABG09236.1"/>
    <property type="molecule type" value="Genomic_DNA"/>
</dbReference>
<dbReference type="SMR" id="Q1B798"/>
<dbReference type="MEROPS" id="T01.980"/>
<dbReference type="KEGG" id="mmc:Mmcs_3129"/>
<dbReference type="HOGENOM" id="CLU_071031_0_0_11"/>
<dbReference type="BioCyc" id="MSP164756:G1G6O-3193-MONOMER"/>
<dbReference type="UniPathway" id="UPA00997"/>
<dbReference type="GO" id="GO:0005737">
    <property type="term" value="C:cytoplasm"/>
    <property type="evidence" value="ECO:0007669"/>
    <property type="project" value="UniProtKB-SubCell"/>
</dbReference>
<dbReference type="GO" id="GO:0019773">
    <property type="term" value="C:proteasome core complex, alpha-subunit complex"/>
    <property type="evidence" value="ECO:0007669"/>
    <property type="project" value="UniProtKB-UniRule"/>
</dbReference>
<dbReference type="GO" id="GO:0004298">
    <property type="term" value="F:threonine-type endopeptidase activity"/>
    <property type="evidence" value="ECO:0007669"/>
    <property type="project" value="InterPro"/>
</dbReference>
<dbReference type="GO" id="GO:0019941">
    <property type="term" value="P:modification-dependent protein catabolic process"/>
    <property type="evidence" value="ECO:0007669"/>
    <property type="project" value="UniProtKB-UniRule"/>
</dbReference>
<dbReference type="GO" id="GO:0010498">
    <property type="term" value="P:proteasomal protein catabolic process"/>
    <property type="evidence" value="ECO:0007669"/>
    <property type="project" value="UniProtKB-UniRule"/>
</dbReference>
<dbReference type="CDD" id="cd01901">
    <property type="entry name" value="Ntn_hydrolase"/>
    <property type="match status" value="1"/>
</dbReference>
<dbReference type="FunFam" id="3.60.20.10:FF:000023">
    <property type="entry name" value="Proteasome subunit alpha"/>
    <property type="match status" value="1"/>
</dbReference>
<dbReference type="Gene3D" id="3.60.20.10">
    <property type="entry name" value="Glutamine Phosphoribosylpyrophosphate, subunit 1, domain 1"/>
    <property type="match status" value="1"/>
</dbReference>
<dbReference type="HAMAP" id="MF_00289_B">
    <property type="entry name" value="Proteasome_A_B"/>
    <property type="match status" value="1"/>
</dbReference>
<dbReference type="InterPro" id="IPR029055">
    <property type="entry name" value="Ntn_hydrolases_N"/>
</dbReference>
<dbReference type="InterPro" id="IPR050115">
    <property type="entry name" value="Proteasome_alpha"/>
</dbReference>
<dbReference type="InterPro" id="IPR023332">
    <property type="entry name" value="Proteasome_alpha-type"/>
</dbReference>
<dbReference type="InterPro" id="IPR022296">
    <property type="entry name" value="Proteasome_asu_bac"/>
</dbReference>
<dbReference type="InterPro" id="IPR001353">
    <property type="entry name" value="Proteasome_sua/b"/>
</dbReference>
<dbReference type="NCBIfam" id="TIGR03691">
    <property type="entry name" value="20S_bact_alpha"/>
    <property type="match status" value="1"/>
</dbReference>
<dbReference type="PANTHER" id="PTHR11599">
    <property type="entry name" value="PROTEASOME SUBUNIT ALPHA/BETA"/>
    <property type="match status" value="1"/>
</dbReference>
<dbReference type="Pfam" id="PF00227">
    <property type="entry name" value="Proteasome"/>
    <property type="match status" value="1"/>
</dbReference>
<dbReference type="SUPFAM" id="SSF56235">
    <property type="entry name" value="N-terminal nucleophile aminohydrolases (Ntn hydrolases)"/>
    <property type="match status" value="1"/>
</dbReference>
<dbReference type="PROSITE" id="PS51475">
    <property type="entry name" value="PROTEASOME_ALPHA_2"/>
    <property type="match status" value="1"/>
</dbReference>
<keyword id="KW-0963">Cytoplasm</keyword>
<keyword id="KW-0647">Proteasome</keyword>
<reference key="1">
    <citation type="submission" date="2006-06" db="EMBL/GenBank/DDBJ databases">
        <title>Complete sequence of chromosome of Mycobacterium sp. MCS.</title>
        <authorList>
            <consortium name="US DOE Joint Genome Institute"/>
            <person name="Copeland A."/>
            <person name="Lucas S."/>
            <person name="Lapidus A."/>
            <person name="Barry K."/>
            <person name="Detter J.C."/>
            <person name="Glavina del Rio T."/>
            <person name="Hammon N."/>
            <person name="Israni S."/>
            <person name="Dalin E."/>
            <person name="Tice H."/>
            <person name="Pitluck S."/>
            <person name="Martinez M."/>
            <person name="Schmutz J."/>
            <person name="Larimer F."/>
            <person name="Land M."/>
            <person name="Hauser L."/>
            <person name="Kyrpides N."/>
            <person name="Kim E."/>
            <person name="Miller C.D."/>
            <person name="Hughes J.E."/>
            <person name="Anderson A.J."/>
            <person name="Sims R.C."/>
            <person name="Richardson P."/>
        </authorList>
    </citation>
    <scope>NUCLEOTIDE SEQUENCE [LARGE SCALE GENOMIC DNA]</scope>
    <source>
        <strain>MCS</strain>
    </source>
</reference>
<accession>Q1B798</accession>
<organism>
    <name type="scientific">Mycobacterium sp. (strain MCS)</name>
    <dbReference type="NCBI Taxonomy" id="164756"/>
    <lineage>
        <taxon>Bacteria</taxon>
        <taxon>Bacillati</taxon>
        <taxon>Actinomycetota</taxon>
        <taxon>Actinomycetes</taxon>
        <taxon>Mycobacteriales</taxon>
        <taxon>Mycobacteriaceae</taxon>
        <taxon>Mycobacterium</taxon>
    </lineage>
</organism>
<protein>
    <recommendedName>
        <fullName evidence="1">Proteasome subunit alpha</fullName>
    </recommendedName>
    <alternativeName>
        <fullName evidence="1">20S proteasome alpha subunit</fullName>
    </alternativeName>
    <alternativeName>
        <fullName evidence="1">Proteasome core protein PrcA</fullName>
    </alternativeName>
</protein>
<comment type="function">
    <text evidence="1">Component of the proteasome core, a large protease complex with broad specificity involved in protein degradation.</text>
</comment>
<comment type="activity regulation">
    <text evidence="1">The formation of the proteasomal ATPase ARC-20S proteasome complex, likely via the docking of the C-termini of ARC into the intersubunit pockets in the alpha-rings, may trigger opening of the gate for substrate entry. Interconversion between the open-gate and close-gate conformations leads to a dynamic regulation of the 20S proteasome proteolysis activity.</text>
</comment>
<comment type="pathway">
    <text evidence="1">Protein degradation; proteasomal Pup-dependent pathway.</text>
</comment>
<comment type="subunit">
    <text evidence="1">The 20S proteasome core is composed of 14 alpha and 14 beta subunits that assemble into four stacked heptameric rings, resulting in a barrel-shaped structure. The two inner rings, each composed of seven catalytic beta subunits, are sandwiched by two outer rings, each composed of seven alpha subunits. The catalytic chamber with the active sites is on the inside of the barrel. Has a gated structure, the ends of the cylinder being occluded by the N-termini of the alpha-subunits. Is capped by the proteasome-associated ATPase, ARC.</text>
</comment>
<comment type="subcellular location">
    <subcellularLocation>
        <location evidence="1">Cytoplasm</location>
    </subcellularLocation>
</comment>
<comment type="similarity">
    <text evidence="1">Belongs to the peptidase T1A family.</text>
</comment>
<name>PSA_MYCSS</name>
<proteinExistence type="inferred from homology"/>
<sequence>MSFPYFISPEQAMRERSELARKGIARGRSVVALAYADGVLFVAENPSRSLQKVSELYDRVGFAAVGRFNEFNNLRSGGIRFADTQGYAYSRRDVTGRQLANVYAQTLGTIFTEQAKPYEVELCVAEVAHFGESKAPELYRITYDGSIADEPHFVVMGGATEPIIAKLNDSYTENAELADAVRIAVDALESGGNGAERRTLGPSTLEVAILDANRPRRAFRRITGSALEALLPQRDAEASADAGAADKPAE</sequence>
<evidence type="ECO:0000255" key="1">
    <source>
        <dbReference type="HAMAP-Rule" id="MF_00289"/>
    </source>
</evidence>
<feature type="chain" id="PRO_0000397157" description="Proteasome subunit alpha">
    <location>
        <begin position="1"/>
        <end position="250"/>
    </location>
</feature>
<gene>
    <name evidence="1" type="primary">prcA</name>
    <name type="ordered locus">Mmcs_3129</name>
</gene>